<reference key="1">
    <citation type="journal article" date="2000" name="Science">
        <title>The genome sequence of Drosophila melanogaster.</title>
        <authorList>
            <person name="Adams M.D."/>
            <person name="Celniker S.E."/>
            <person name="Holt R.A."/>
            <person name="Evans C.A."/>
            <person name="Gocayne J.D."/>
            <person name="Amanatides P.G."/>
            <person name="Scherer S.E."/>
            <person name="Li P.W."/>
            <person name="Hoskins R.A."/>
            <person name="Galle R.F."/>
            <person name="George R.A."/>
            <person name="Lewis S.E."/>
            <person name="Richards S."/>
            <person name="Ashburner M."/>
            <person name="Henderson S.N."/>
            <person name="Sutton G.G."/>
            <person name="Wortman J.R."/>
            <person name="Yandell M.D."/>
            <person name="Zhang Q."/>
            <person name="Chen L.X."/>
            <person name="Brandon R.C."/>
            <person name="Rogers Y.-H.C."/>
            <person name="Blazej R.G."/>
            <person name="Champe M."/>
            <person name="Pfeiffer B.D."/>
            <person name="Wan K.H."/>
            <person name="Doyle C."/>
            <person name="Baxter E.G."/>
            <person name="Helt G."/>
            <person name="Nelson C.R."/>
            <person name="Miklos G.L.G."/>
            <person name="Abril J.F."/>
            <person name="Agbayani A."/>
            <person name="An H.-J."/>
            <person name="Andrews-Pfannkoch C."/>
            <person name="Baldwin D."/>
            <person name="Ballew R.M."/>
            <person name="Basu A."/>
            <person name="Baxendale J."/>
            <person name="Bayraktaroglu L."/>
            <person name="Beasley E.M."/>
            <person name="Beeson K.Y."/>
            <person name="Benos P.V."/>
            <person name="Berman B.P."/>
            <person name="Bhandari D."/>
            <person name="Bolshakov S."/>
            <person name="Borkova D."/>
            <person name="Botchan M.R."/>
            <person name="Bouck J."/>
            <person name="Brokstein P."/>
            <person name="Brottier P."/>
            <person name="Burtis K.C."/>
            <person name="Busam D.A."/>
            <person name="Butler H."/>
            <person name="Cadieu E."/>
            <person name="Center A."/>
            <person name="Chandra I."/>
            <person name="Cherry J.M."/>
            <person name="Cawley S."/>
            <person name="Dahlke C."/>
            <person name="Davenport L.B."/>
            <person name="Davies P."/>
            <person name="de Pablos B."/>
            <person name="Delcher A."/>
            <person name="Deng Z."/>
            <person name="Mays A.D."/>
            <person name="Dew I."/>
            <person name="Dietz S.M."/>
            <person name="Dodson K."/>
            <person name="Doup L.E."/>
            <person name="Downes M."/>
            <person name="Dugan-Rocha S."/>
            <person name="Dunkov B.C."/>
            <person name="Dunn P."/>
            <person name="Durbin K.J."/>
            <person name="Evangelista C.C."/>
            <person name="Ferraz C."/>
            <person name="Ferriera S."/>
            <person name="Fleischmann W."/>
            <person name="Fosler C."/>
            <person name="Gabrielian A.E."/>
            <person name="Garg N.S."/>
            <person name="Gelbart W.M."/>
            <person name="Glasser K."/>
            <person name="Glodek A."/>
            <person name="Gong F."/>
            <person name="Gorrell J.H."/>
            <person name="Gu Z."/>
            <person name="Guan P."/>
            <person name="Harris M."/>
            <person name="Harris N.L."/>
            <person name="Harvey D.A."/>
            <person name="Heiman T.J."/>
            <person name="Hernandez J.R."/>
            <person name="Houck J."/>
            <person name="Hostin D."/>
            <person name="Houston K.A."/>
            <person name="Howland T.J."/>
            <person name="Wei M.-H."/>
            <person name="Ibegwam C."/>
            <person name="Jalali M."/>
            <person name="Kalush F."/>
            <person name="Karpen G.H."/>
            <person name="Ke Z."/>
            <person name="Kennison J.A."/>
            <person name="Ketchum K.A."/>
            <person name="Kimmel B.E."/>
            <person name="Kodira C.D."/>
            <person name="Kraft C.L."/>
            <person name="Kravitz S."/>
            <person name="Kulp D."/>
            <person name="Lai Z."/>
            <person name="Lasko P."/>
            <person name="Lei Y."/>
            <person name="Levitsky A.A."/>
            <person name="Li J.H."/>
            <person name="Li Z."/>
            <person name="Liang Y."/>
            <person name="Lin X."/>
            <person name="Liu X."/>
            <person name="Mattei B."/>
            <person name="McIntosh T.C."/>
            <person name="McLeod M.P."/>
            <person name="McPherson D."/>
            <person name="Merkulov G."/>
            <person name="Milshina N.V."/>
            <person name="Mobarry C."/>
            <person name="Morris J."/>
            <person name="Moshrefi A."/>
            <person name="Mount S.M."/>
            <person name="Moy M."/>
            <person name="Murphy B."/>
            <person name="Murphy L."/>
            <person name="Muzny D.M."/>
            <person name="Nelson D.L."/>
            <person name="Nelson D.R."/>
            <person name="Nelson K.A."/>
            <person name="Nixon K."/>
            <person name="Nusskern D.R."/>
            <person name="Pacleb J.M."/>
            <person name="Palazzolo M."/>
            <person name="Pittman G.S."/>
            <person name="Pan S."/>
            <person name="Pollard J."/>
            <person name="Puri V."/>
            <person name="Reese M.G."/>
            <person name="Reinert K."/>
            <person name="Remington K."/>
            <person name="Saunders R.D.C."/>
            <person name="Scheeler F."/>
            <person name="Shen H."/>
            <person name="Shue B.C."/>
            <person name="Siden-Kiamos I."/>
            <person name="Simpson M."/>
            <person name="Skupski M.P."/>
            <person name="Smith T.J."/>
            <person name="Spier E."/>
            <person name="Spradling A.C."/>
            <person name="Stapleton M."/>
            <person name="Strong R."/>
            <person name="Sun E."/>
            <person name="Svirskas R."/>
            <person name="Tector C."/>
            <person name="Turner R."/>
            <person name="Venter E."/>
            <person name="Wang A.H."/>
            <person name="Wang X."/>
            <person name="Wang Z.-Y."/>
            <person name="Wassarman D.A."/>
            <person name="Weinstock G.M."/>
            <person name="Weissenbach J."/>
            <person name="Williams S.M."/>
            <person name="Woodage T."/>
            <person name="Worley K.C."/>
            <person name="Wu D."/>
            <person name="Yang S."/>
            <person name="Yao Q.A."/>
            <person name="Ye J."/>
            <person name="Yeh R.-F."/>
            <person name="Zaveri J.S."/>
            <person name="Zhan M."/>
            <person name="Zhang G."/>
            <person name="Zhao Q."/>
            <person name="Zheng L."/>
            <person name="Zheng X.H."/>
            <person name="Zhong F.N."/>
            <person name="Zhong W."/>
            <person name="Zhou X."/>
            <person name="Zhu S.C."/>
            <person name="Zhu X."/>
            <person name="Smith H.O."/>
            <person name="Gibbs R.A."/>
            <person name="Myers E.W."/>
            <person name="Rubin G.M."/>
            <person name="Venter J.C."/>
        </authorList>
    </citation>
    <scope>NUCLEOTIDE SEQUENCE [LARGE SCALE GENOMIC DNA]</scope>
    <source>
        <strain>Berkeley</strain>
    </source>
</reference>
<reference key="2">
    <citation type="journal article" date="2002" name="Genome Biol.">
        <title>Annotation of the Drosophila melanogaster euchromatic genome: a systematic review.</title>
        <authorList>
            <person name="Misra S."/>
            <person name="Crosby M.A."/>
            <person name="Mungall C.J."/>
            <person name="Matthews B.B."/>
            <person name="Campbell K.S."/>
            <person name="Hradecky P."/>
            <person name="Huang Y."/>
            <person name="Kaminker J.S."/>
            <person name="Millburn G.H."/>
            <person name="Prochnik S.E."/>
            <person name="Smith C.D."/>
            <person name="Tupy J.L."/>
            <person name="Whitfield E.J."/>
            <person name="Bayraktaroglu L."/>
            <person name="Berman B.P."/>
            <person name="Bettencourt B.R."/>
            <person name="Celniker S.E."/>
            <person name="de Grey A.D.N.J."/>
            <person name="Drysdale R.A."/>
            <person name="Harris N.L."/>
            <person name="Richter J."/>
            <person name="Russo S."/>
            <person name="Schroeder A.J."/>
            <person name="Shu S.Q."/>
            <person name="Stapleton M."/>
            <person name="Yamada C."/>
            <person name="Ashburner M."/>
            <person name="Gelbart W.M."/>
            <person name="Rubin G.M."/>
            <person name="Lewis S.E."/>
        </authorList>
    </citation>
    <scope>GENOME REANNOTATION</scope>
    <source>
        <strain>Berkeley</strain>
    </source>
</reference>
<reference key="3">
    <citation type="submission" date="2003-08" db="EMBL/GenBank/DDBJ databases">
        <authorList>
            <person name="Stapleton M."/>
            <person name="Brokstein P."/>
            <person name="Hong L."/>
            <person name="Agbayani A."/>
            <person name="Carlson J.W."/>
            <person name="Champe M."/>
            <person name="Chavez C."/>
            <person name="Dorsett V."/>
            <person name="Dresnek D."/>
            <person name="Farfan D."/>
            <person name="Frise E."/>
            <person name="George R.A."/>
            <person name="Gonzalez M."/>
            <person name="Guarin H."/>
            <person name="Kronmiller B."/>
            <person name="Li P.W."/>
            <person name="Liao G."/>
            <person name="Miranda A."/>
            <person name="Mungall C.J."/>
            <person name="Nunoo J."/>
            <person name="Pacleb J.M."/>
            <person name="Paragas V."/>
            <person name="Park S."/>
            <person name="Patel S."/>
            <person name="Phouanenavong S."/>
            <person name="Wan K.H."/>
            <person name="Yu C."/>
            <person name="Lewis S.E."/>
            <person name="Rubin G.M."/>
            <person name="Celniker S.E."/>
        </authorList>
    </citation>
    <scope>NUCLEOTIDE SEQUENCE [LARGE SCALE MRNA]</scope>
    <source>
        <strain>Berkeley</strain>
        <tissue>Embryo</tissue>
    </source>
</reference>
<proteinExistence type="evidence at transcript level"/>
<gene>
    <name type="ORF">CG8005</name>
</gene>
<protein>
    <recommendedName>
        <fullName>Probable deoxyhypusine synthase</fullName>
        <shortName>DHS</shortName>
        <ecNumber>2.5.1.46</ecNumber>
    </recommendedName>
</protein>
<accession>Q9VSF4</accession>
<dbReference type="EC" id="2.5.1.46"/>
<dbReference type="EMBL" id="AE014296">
    <property type="protein sequence ID" value="AAF50467.2"/>
    <property type="molecule type" value="Genomic_DNA"/>
</dbReference>
<dbReference type="EMBL" id="BT010229">
    <property type="protein sequence ID" value="AAQ23547.1"/>
    <property type="molecule type" value="mRNA"/>
</dbReference>
<dbReference type="RefSeq" id="NP_648188.2">
    <property type="nucleotide sequence ID" value="NM_139931.3"/>
</dbReference>
<dbReference type="SMR" id="Q9VSF4"/>
<dbReference type="BioGRID" id="64337">
    <property type="interactions" value="4"/>
</dbReference>
<dbReference type="FunCoup" id="Q9VSF4">
    <property type="interactions" value="1993"/>
</dbReference>
<dbReference type="IntAct" id="Q9VSF4">
    <property type="interactions" value="5"/>
</dbReference>
<dbReference type="STRING" id="7227.FBpp0076418"/>
<dbReference type="PaxDb" id="7227-FBpp0076418"/>
<dbReference type="DNASU" id="38917"/>
<dbReference type="EnsemblMetazoa" id="FBtr0076695">
    <property type="protein sequence ID" value="FBpp0076418"/>
    <property type="gene ID" value="FBgn0035854"/>
</dbReference>
<dbReference type="GeneID" id="38917"/>
<dbReference type="KEGG" id="dme:Dmel_CG8005"/>
<dbReference type="UCSC" id="CG8005-RA">
    <property type="organism name" value="d. melanogaster"/>
</dbReference>
<dbReference type="AGR" id="FB:FBgn0035854"/>
<dbReference type="CTD" id="1725"/>
<dbReference type="FlyBase" id="FBgn0035854">
    <property type="gene designation" value="CG8005"/>
</dbReference>
<dbReference type="VEuPathDB" id="VectorBase:FBgn0035854"/>
<dbReference type="eggNOG" id="KOG2924">
    <property type="taxonomic scope" value="Eukaryota"/>
</dbReference>
<dbReference type="GeneTree" id="ENSGT00390000008063"/>
<dbReference type="HOGENOM" id="CLU_039781_0_0_1"/>
<dbReference type="InParanoid" id="Q9VSF4"/>
<dbReference type="OMA" id="HSIINAN"/>
<dbReference type="OrthoDB" id="294378at2759"/>
<dbReference type="PhylomeDB" id="Q9VSF4"/>
<dbReference type="Reactome" id="R-DME-204626">
    <property type="pathway name" value="Hypusine synthesis from eIF5A-lysine"/>
</dbReference>
<dbReference type="UniPathway" id="UPA00354"/>
<dbReference type="BioGRID-ORCS" id="38917">
    <property type="hits" value="1 hit in 1 CRISPR screen"/>
</dbReference>
<dbReference type="GenomeRNAi" id="38917"/>
<dbReference type="PRO" id="PR:Q9VSF4"/>
<dbReference type="Proteomes" id="UP000000803">
    <property type="component" value="Chromosome 3L"/>
</dbReference>
<dbReference type="Bgee" id="FBgn0035854">
    <property type="expression patterns" value="Expressed in eye disc (Drosophila) and 31 other cell types or tissues"/>
</dbReference>
<dbReference type="ExpressionAtlas" id="Q9VSF4">
    <property type="expression patterns" value="baseline and differential"/>
</dbReference>
<dbReference type="GO" id="GO:0005737">
    <property type="term" value="C:cytoplasm"/>
    <property type="evidence" value="ECO:0000318"/>
    <property type="project" value="GO_Central"/>
</dbReference>
<dbReference type="GO" id="GO:0034038">
    <property type="term" value="F:deoxyhypusine synthase activity"/>
    <property type="evidence" value="ECO:0000315"/>
    <property type="project" value="UniProtKB"/>
</dbReference>
<dbReference type="GO" id="GO:2000378">
    <property type="term" value="P:negative regulation of reactive oxygen species metabolic process"/>
    <property type="evidence" value="ECO:0000315"/>
    <property type="project" value="UniProtKB"/>
</dbReference>
<dbReference type="GO" id="GO:0036211">
    <property type="term" value="P:protein modification process"/>
    <property type="evidence" value="ECO:0000315"/>
    <property type="project" value="UniProtKB"/>
</dbReference>
<dbReference type="GO" id="GO:0008216">
    <property type="term" value="P:spermidine metabolic process"/>
    <property type="evidence" value="ECO:0000318"/>
    <property type="project" value="GO_Central"/>
</dbReference>
<dbReference type="FunFam" id="3.40.910.10:FF:000001">
    <property type="entry name" value="Probable deoxyhypusine synthase"/>
    <property type="match status" value="1"/>
</dbReference>
<dbReference type="Gene3D" id="3.40.910.10">
    <property type="entry name" value="Deoxyhypusine synthase"/>
    <property type="match status" value="1"/>
</dbReference>
<dbReference type="InterPro" id="IPR002773">
    <property type="entry name" value="Deoxyhypusine_synthase"/>
</dbReference>
<dbReference type="InterPro" id="IPR036982">
    <property type="entry name" value="Deoxyhypusine_synthase_sf"/>
</dbReference>
<dbReference type="InterPro" id="IPR029035">
    <property type="entry name" value="DHS-like_NAD/FAD-binding_dom"/>
</dbReference>
<dbReference type="NCBIfam" id="TIGR00321">
    <property type="entry name" value="dhys"/>
    <property type="match status" value="1"/>
</dbReference>
<dbReference type="PANTHER" id="PTHR11703">
    <property type="entry name" value="DEOXYHYPUSINE SYNTHASE"/>
    <property type="match status" value="1"/>
</dbReference>
<dbReference type="PANTHER" id="PTHR11703:SF0">
    <property type="entry name" value="DEOXYHYPUSINE SYNTHASE"/>
    <property type="match status" value="1"/>
</dbReference>
<dbReference type="Pfam" id="PF01916">
    <property type="entry name" value="DS"/>
    <property type="match status" value="1"/>
</dbReference>
<dbReference type="SUPFAM" id="SSF52467">
    <property type="entry name" value="DHS-like NAD/FAD-binding domain"/>
    <property type="match status" value="1"/>
</dbReference>
<feature type="chain" id="PRO_0000134472" description="Probable deoxyhypusine synthase">
    <location>
        <begin position="1"/>
        <end position="368"/>
    </location>
</feature>
<feature type="active site" description="Nucleophile" evidence="1">
    <location>
        <position position="324"/>
    </location>
</feature>
<feature type="binding site" evidence="1">
    <location>
        <begin position="100"/>
        <end position="104"/>
    </location>
    <ligand>
        <name>NAD(+)</name>
        <dbReference type="ChEBI" id="CHEBI:57540"/>
    </ligand>
</feature>
<feature type="binding site" evidence="1">
    <location>
        <begin position="126"/>
        <end position="128"/>
    </location>
    <ligand>
        <name>NAD(+)</name>
        <dbReference type="ChEBI" id="CHEBI:57540"/>
    </ligand>
</feature>
<feature type="binding site" evidence="1">
    <location>
        <begin position="131"/>
        <end position="132"/>
    </location>
    <ligand>
        <name>spermidine</name>
        <dbReference type="ChEBI" id="CHEBI:57834"/>
    </ligand>
</feature>
<feature type="binding site" evidence="1">
    <location>
        <position position="132"/>
    </location>
    <ligand>
        <name>NAD(+)</name>
        <dbReference type="ChEBI" id="CHEBI:57540"/>
    </ligand>
</feature>
<feature type="binding site" evidence="1">
    <location>
        <position position="233"/>
    </location>
    <ligand>
        <name>NAD(+)</name>
        <dbReference type="ChEBI" id="CHEBI:57540"/>
    </ligand>
</feature>
<feature type="binding site" evidence="1">
    <location>
        <position position="238"/>
    </location>
    <ligand>
        <name>spermidine</name>
        <dbReference type="ChEBI" id="CHEBI:57834"/>
    </ligand>
</feature>
<feature type="binding site" evidence="1">
    <location>
        <position position="278"/>
    </location>
    <ligand>
        <name>NAD(+)</name>
        <dbReference type="ChEBI" id="CHEBI:57540"/>
    </ligand>
</feature>
<feature type="binding site" evidence="1">
    <location>
        <position position="283"/>
    </location>
    <ligand>
        <name>spermidine</name>
        <dbReference type="ChEBI" id="CHEBI:57834"/>
    </ligand>
</feature>
<feature type="binding site" evidence="1">
    <location>
        <begin position="303"/>
        <end position="304"/>
    </location>
    <ligand>
        <name>NAD(+)</name>
        <dbReference type="ChEBI" id="CHEBI:57540"/>
    </ligand>
</feature>
<feature type="binding site" evidence="1">
    <location>
        <begin position="309"/>
        <end position="311"/>
    </location>
    <ligand>
        <name>spermidine</name>
        <dbReference type="ChEBI" id="CHEBI:57834"/>
    </ligand>
</feature>
<feature type="binding site" evidence="1">
    <location>
        <begin position="318"/>
        <end position="324"/>
    </location>
    <ligand>
        <name>spermidine</name>
        <dbReference type="ChEBI" id="CHEBI:57834"/>
    </ligand>
</feature>
<feature type="binding site" evidence="1">
    <location>
        <begin position="337"/>
        <end position="338"/>
    </location>
    <ligand>
        <name>NAD(+)</name>
        <dbReference type="ChEBI" id="CHEBI:57540"/>
    </ligand>
</feature>
<name>DHYS_DROME</name>
<comment type="function">
    <text evidence="1">Catalyzes the NAD-dependent oxidative cleavage of spermidine and the subsequent transfer of the butylamine moiety of spermidine to the epsilon-amino group of a specific lysine residue of the eIF-5A precursor protein to form the intermediate deoxyhypusine residue.</text>
</comment>
<comment type="catalytic activity">
    <reaction>
        <text>[eIF5A protein]-L-lysine + spermidine = [eIF5A protein]-deoxyhypusine + propane-1,3-diamine</text>
        <dbReference type="Rhea" id="RHEA:33299"/>
        <dbReference type="Rhea" id="RHEA-COMP:10143"/>
        <dbReference type="Rhea" id="RHEA-COMP:10144"/>
        <dbReference type="ChEBI" id="CHEBI:29969"/>
        <dbReference type="ChEBI" id="CHEBI:57484"/>
        <dbReference type="ChEBI" id="CHEBI:57834"/>
        <dbReference type="ChEBI" id="CHEBI:82657"/>
        <dbReference type="EC" id="2.5.1.46"/>
    </reaction>
</comment>
<comment type="cofactor">
    <cofactor evidence="1">
        <name>NAD(+)</name>
        <dbReference type="ChEBI" id="CHEBI:57540"/>
    </cofactor>
</comment>
<comment type="pathway">
    <text>Protein modification; eIF5A hypusination.</text>
</comment>
<comment type="similarity">
    <text evidence="2">Belongs to the deoxyhypusine synthase family.</text>
</comment>
<evidence type="ECO:0000250" key="1"/>
<evidence type="ECO:0000305" key="2"/>
<keyword id="KW-0386">Hypusine biosynthesis</keyword>
<keyword id="KW-0520">NAD</keyword>
<keyword id="KW-1185">Reference proteome</keyword>
<keyword id="KW-0808">Transferase</keyword>
<sequence length="368" mass="41080">MSTEPSVAKDAVLKRSEALAENTPQVSGYDFNEGLDYSKLFESYVNTGFQATNLGLAIREINRMLDCRDQPLEADQIDSHETDDFIRRRSKCTVFLGYTSNLVSSGLRETIRFLAEHRMIDCIVTTAGGVEEDFIKCLAPTFMGSFELSGRDLRERGINRIGNLLVPNDNYCKFEDWVMPLLDEMLEEQKSQGTIWSPSKIIHRLGERIGDPSSIYYWAAKNQIPVFCPALTDGSLGDMMYFHSFRQPGLVVDILSDLRRLNTMAVKAVNSGMIIVGGGVIKHHICNANLMRNGADYSVFINTASEFDGSDSGARPDEAISWGKIRKDATPVKVYAEASLVFPLIVGETFAKRHHCAGKELPRETNQV</sequence>
<organism>
    <name type="scientific">Drosophila melanogaster</name>
    <name type="common">Fruit fly</name>
    <dbReference type="NCBI Taxonomy" id="7227"/>
    <lineage>
        <taxon>Eukaryota</taxon>
        <taxon>Metazoa</taxon>
        <taxon>Ecdysozoa</taxon>
        <taxon>Arthropoda</taxon>
        <taxon>Hexapoda</taxon>
        <taxon>Insecta</taxon>
        <taxon>Pterygota</taxon>
        <taxon>Neoptera</taxon>
        <taxon>Endopterygota</taxon>
        <taxon>Diptera</taxon>
        <taxon>Brachycera</taxon>
        <taxon>Muscomorpha</taxon>
        <taxon>Ephydroidea</taxon>
        <taxon>Drosophilidae</taxon>
        <taxon>Drosophila</taxon>
        <taxon>Sophophora</taxon>
    </lineage>
</organism>